<accession>A2R3Z3</accession>
<protein>
    <recommendedName>
        <fullName>Mitochondrial division protein 1</fullName>
    </recommendedName>
</protein>
<comment type="function">
    <text evidence="1">Involved in mitochondrial fission. Acts as an adapter protein required to form mitochondrial fission complexes. Formation of these complexes is required to promote constriction and fission of the mitochondrial compartment at a late step in mitochondrial division (By similarity).</text>
</comment>
<comment type="subcellular location">
    <subcellularLocation>
        <location evidence="1">Mitochondrion outer membrane</location>
        <topology evidence="1">Peripheral membrane protein</topology>
        <orientation evidence="1">Cytoplasmic side</orientation>
    </subcellularLocation>
</comment>
<comment type="similarity">
    <text evidence="4">Belongs to the WD repeat MDV1/CAF4 family.</text>
</comment>
<comment type="sequence caution" evidence="4">
    <conflict type="erroneous gene model prediction">
        <sequence resource="EMBL-CDS" id="CAK42161"/>
    </conflict>
</comment>
<dbReference type="EMBL" id="AM270325">
    <property type="protein sequence ID" value="CAK42161.1"/>
    <property type="status" value="ALT_SEQ"/>
    <property type="molecule type" value="Genomic_DNA"/>
</dbReference>
<dbReference type="RefSeq" id="XP_001401223.2">
    <property type="nucleotide sequence ID" value="XM_001401186.2"/>
</dbReference>
<dbReference type="SMR" id="A2R3Z3"/>
<dbReference type="EnsemblFungi" id="CAK42161">
    <property type="protein sequence ID" value="CAK42161"/>
    <property type="gene ID" value="An14g06000"/>
</dbReference>
<dbReference type="VEuPathDB" id="FungiDB:An14g06000"/>
<dbReference type="OrthoDB" id="72454at5052"/>
<dbReference type="Proteomes" id="UP000006706">
    <property type="component" value="Chromosome 1R"/>
</dbReference>
<dbReference type="GO" id="GO:0005741">
    <property type="term" value="C:mitochondrial outer membrane"/>
    <property type="evidence" value="ECO:0007669"/>
    <property type="project" value="UniProtKB-SubCell"/>
</dbReference>
<dbReference type="GO" id="GO:0005634">
    <property type="term" value="C:nucleus"/>
    <property type="evidence" value="ECO:0007669"/>
    <property type="project" value="TreeGrafter"/>
</dbReference>
<dbReference type="GO" id="GO:1990234">
    <property type="term" value="C:transferase complex"/>
    <property type="evidence" value="ECO:0007669"/>
    <property type="project" value="UniProtKB-ARBA"/>
</dbReference>
<dbReference type="CDD" id="cd22881">
    <property type="entry name" value="Mdv1_N"/>
    <property type="match status" value="1"/>
</dbReference>
<dbReference type="CDD" id="cd00200">
    <property type="entry name" value="WD40"/>
    <property type="match status" value="1"/>
</dbReference>
<dbReference type="FunFam" id="2.130.10.10:FF:000404">
    <property type="entry name" value="Mitochondrial division protein 1"/>
    <property type="match status" value="1"/>
</dbReference>
<dbReference type="FunFam" id="2.130.10.10:FF:000881">
    <property type="entry name" value="Mitochondrial division protein 1"/>
    <property type="match status" value="1"/>
</dbReference>
<dbReference type="Gene3D" id="6.10.280.220">
    <property type="match status" value="1"/>
</dbReference>
<dbReference type="Gene3D" id="2.130.10.10">
    <property type="entry name" value="YVTN repeat-like/Quinoprotein amine dehydrogenase"/>
    <property type="match status" value="2"/>
</dbReference>
<dbReference type="InterPro" id="IPR020472">
    <property type="entry name" value="G-protein_beta_WD-40_rep"/>
</dbReference>
<dbReference type="InterPro" id="IPR015943">
    <property type="entry name" value="WD40/YVTN_repeat-like_dom_sf"/>
</dbReference>
<dbReference type="InterPro" id="IPR019775">
    <property type="entry name" value="WD40_repeat_CS"/>
</dbReference>
<dbReference type="InterPro" id="IPR036322">
    <property type="entry name" value="WD40_repeat_dom_sf"/>
</dbReference>
<dbReference type="InterPro" id="IPR001680">
    <property type="entry name" value="WD40_rpt"/>
</dbReference>
<dbReference type="PANTHER" id="PTHR22847:SF637">
    <property type="entry name" value="WD REPEAT DOMAIN 5B"/>
    <property type="match status" value="1"/>
</dbReference>
<dbReference type="PANTHER" id="PTHR22847">
    <property type="entry name" value="WD40 REPEAT PROTEIN"/>
    <property type="match status" value="1"/>
</dbReference>
<dbReference type="Pfam" id="PF00400">
    <property type="entry name" value="WD40"/>
    <property type="match status" value="4"/>
</dbReference>
<dbReference type="PRINTS" id="PR00320">
    <property type="entry name" value="GPROTEINBRPT"/>
</dbReference>
<dbReference type="SMART" id="SM00320">
    <property type="entry name" value="WD40"/>
    <property type="match status" value="6"/>
</dbReference>
<dbReference type="SUPFAM" id="SSF50978">
    <property type="entry name" value="WD40 repeat-like"/>
    <property type="match status" value="1"/>
</dbReference>
<dbReference type="PROSITE" id="PS00678">
    <property type="entry name" value="WD_REPEATS_1"/>
    <property type="match status" value="3"/>
</dbReference>
<dbReference type="PROSITE" id="PS50082">
    <property type="entry name" value="WD_REPEATS_2"/>
    <property type="match status" value="5"/>
</dbReference>
<dbReference type="PROSITE" id="PS50294">
    <property type="entry name" value="WD_REPEATS_REGION"/>
    <property type="match status" value="1"/>
</dbReference>
<name>MDV1_ASPNC</name>
<proteinExistence type="inferred from homology"/>
<feature type="chain" id="PRO_0000330098" description="Mitochondrial division protein 1">
    <location>
        <begin position="1"/>
        <end position="657"/>
    </location>
</feature>
<feature type="repeat" description="WD 1">
    <location>
        <begin position="319"/>
        <end position="360"/>
    </location>
</feature>
<feature type="repeat" description="WD 2">
    <location>
        <begin position="361"/>
        <end position="398"/>
    </location>
</feature>
<feature type="repeat" description="WD 3">
    <location>
        <begin position="436"/>
        <end position="475"/>
    </location>
</feature>
<feature type="repeat" description="WD 4">
    <location>
        <begin position="481"/>
        <end position="538"/>
    </location>
</feature>
<feature type="repeat" description="WD 5">
    <location>
        <begin position="541"/>
        <end position="580"/>
    </location>
</feature>
<feature type="repeat" description="WD 6">
    <location>
        <begin position="582"/>
        <end position="617"/>
    </location>
</feature>
<feature type="repeat" description="WD 7">
    <location>
        <begin position="628"/>
        <end position="657"/>
    </location>
</feature>
<feature type="region of interest" description="Disordered" evidence="3">
    <location>
        <begin position="1"/>
        <end position="23"/>
    </location>
</feature>
<feature type="region of interest" description="Disordered" evidence="3">
    <location>
        <begin position="140"/>
        <end position="174"/>
    </location>
</feature>
<feature type="region of interest" description="Disordered" evidence="3">
    <location>
        <begin position="242"/>
        <end position="268"/>
    </location>
</feature>
<feature type="region of interest" description="Disordered" evidence="3">
    <location>
        <begin position="398"/>
        <end position="420"/>
    </location>
</feature>
<feature type="coiled-coil region" evidence="2">
    <location>
        <begin position="210"/>
        <end position="250"/>
    </location>
</feature>
<feature type="compositionally biased region" description="Basic and acidic residues" evidence="3">
    <location>
        <begin position="1"/>
        <end position="10"/>
    </location>
</feature>
<feature type="compositionally biased region" description="Basic residues" evidence="3">
    <location>
        <begin position="141"/>
        <end position="152"/>
    </location>
</feature>
<reference key="1">
    <citation type="journal article" date="2007" name="Nat. Biotechnol.">
        <title>Genome sequencing and analysis of the versatile cell factory Aspergillus niger CBS 513.88.</title>
        <authorList>
            <person name="Pel H.J."/>
            <person name="de Winde J.H."/>
            <person name="Archer D.B."/>
            <person name="Dyer P.S."/>
            <person name="Hofmann G."/>
            <person name="Schaap P.J."/>
            <person name="Turner G."/>
            <person name="de Vries R.P."/>
            <person name="Albang R."/>
            <person name="Albermann K."/>
            <person name="Andersen M.R."/>
            <person name="Bendtsen J.D."/>
            <person name="Benen J.A.E."/>
            <person name="van den Berg M."/>
            <person name="Breestraat S."/>
            <person name="Caddick M.X."/>
            <person name="Contreras R."/>
            <person name="Cornell M."/>
            <person name="Coutinho P.M."/>
            <person name="Danchin E.G.J."/>
            <person name="Debets A.J.M."/>
            <person name="Dekker P."/>
            <person name="van Dijck P.W.M."/>
            <person name="van Dijk A."/>
            <person name="Dijkhuizen L."/>
            <person name="Driessen A.J.M."/>
            <person name="d'Enfert C."/>
            <person name="Geysens S."/>
            <person name="Goosen C."/>
            <person name="Groot G.S.P."/>
            <person name="de Groot P.W.J."/>
            <person name="Guillemette T."/>
            <person name="Henrissat B."/>
            <person name="Herweijer M."/>
            <person name="van den Hombergh J.P.T.W."/>
            <person name="van den Hondel C.A.M.J.J."/>
            <person name="van der Heijden R.T.J.M."/>
            <person name="van der Kaaij R.M."/>
            <person name="Klis F.M."/>
            <person name="Kools H.J."/>
            <person name="Kubicek C.P."/>
            <person name="van Kuyk P.A."/>
            <person name="Lauber J."/>
            <person name="Lu X."/>
            <person name="van der Maarel M.J.E.C."/>
            <person name="Meulenberg R."/>
            <person name="Menke H."/>
            <person name="Mortimer M.A."/>
            <person name="Nielsen J."/>
            <person name="Oliver S.G."/>
            <person name="Olsthoorn M."/>
            <person name="Pal K."/>
            <person name="van Peij N.N.M.E."/>
            <person name="Ram A.F.J."/>
            <person name="Rinas U."/>
            <person name="Roubos J.A."/>
            <person name="Sagt C.M.J."/>
            <person name="Schmoll M."/>
            <person name="Sun J."/>
            <person name="Ussery D."/>
            <person name="Varga J."/>
            <person name="Vervecken W."/>
            <person name="van de Vondervoort P.J.J."/>
            <person name="Wedler H."/>
            <person name="Woesten H.A.B."/>
            <person name="Zeng A.-P."/>
            <person name="van Ooyen A.J.J."/>
            <person name="Visser J."/>
            <person name="Stam H."/>
        </authorList>
    </citation>
    <scope>NUCLEOTIDE SEQUENCE [LARGE SCALE GENOMIC DNA]</scope>
    <source>
        <strain>ATCC MYA-4892 / CBS 513.88 / FGSC A1513</strain>
    </source>
</reference>
<organism>
    <name type="scientific">Aspergillus niger (strain ATCC MYA-4892 / CBS 513.88 / FGSC A1513)</name>
    <dbReference type="NCBI Taxonomy" id="425011"/>
    <lineage>
        <taxon>Eukaryota</taxon>
        <taxon>Fungi</taxon>
        <taxon>Dikarya</taxon>
        <taxon>Ascomycota</taxon>
        <taxon>Pezizomycotina</taxon>
        <taxon>Eurotiomycetes</taxon>
        <taxon>Eurotiomycetidae</taxon>
        <taxon>Eurotiales</taxon>
        <taxon>Aspergillaceae</taxon>
        <taxon>Aspergillus</taxon>
        <taxon>Aspergillus subgen. Circumdati</taxon>
    </lineage>
</organism>
<gene>
    <name type="primary">mdv1</name>
    <name type="ORF">An14g06000</name>
</gene>
<keyword id="KW-0175">Coiled coil</keyword>
<keyword id="KW-0472">Membrane</keyword>
<keyword id="KW-0496">Mitochondrion</keyword>
<keyword id="KW-1000">Mitochondrion outer membrane</keyword>
<keyword id="KW-1185">Reference proteome</keyword>
<keyword id="KW-0677">Repeat</keyword>
<keyword id="KW-0853">WD repeat</keyword>
<sequence>MDKHRRRDESPSGLSDIVEPDGLLGTGITSRHIEAFGRKVTSTAGHLMGPAPDSSTGGHYHTAMADIQRELRHPNTQRKVFSLTQTTPTDLVRSKLSTTEIQSRAISSLPDELLANIPDDSSSYSLFQGFQASQDDIEYRRAHRRRSSKSKKLLKDGETRGALPSAPSDLKKERDLLSRRMELMGVRKNMCSSEIHDIDNKIANLHNMRKIVLDRLAGLEMEEADLEHELNEIENKLEDIQEEQQEAEVPPPATPKSSEANDDSIVSEDPAMGASFMSESIYQKIPSPKSVKQRSIRKRSMPVLHEHFAPGSEIKEMPAHSDMVTAIDFDYPFGTMISAALDDTVRVWDLNVGRCVGFLEGHNASVRCLQIEDNIVATGSMDASVKLWDLSRARTTTRDNRVTRREDDEESAQADDASMASHSTTLEDCYVYSLDAHVDEVTALHFKGDTLISGSADKTLRQWDLVKGRCVQTLDVLWAAAQASTLGSETTWRPSGRLPDASADFVGAVQCFDAALACGTADGMVRLWDLRSGQVHRSLVGHTGPITCLQFDDVHLVTGSQDRSIRIWDLRTGSIFDAYAYDKPITSMMFDTKRIVAAAGENVVKVYDKADGHHWDCGAGVGVDDSGPQPATVERVRLKDGFLVEGRKDGIVAAWTC</sequence>
<evidence type="ECO:0000250" key="1"/>
<evidence type="ECO:0000255" key="2"/>
<evidence type="ECO:0000256" key="3">
    <source>
        <dbReference type="SAM" id="MobiDB-lite"/>
    </source>
</evidence>
<evidence type="ECO:0000305" key="4"/>